<organism>
    <name type="scientific">Pseudomonas aeruginosa (strain ATCC 15692 / DSM 22644 / CIP 104116 / JCM 14847 / LMG 12228 / 1C / PRS 101 / PAO1)</name>
    <dbReference type="NCBI Taxonomy" id="208964"/>
    <lineage>
        <taxon>Bacteria</taxon>
        <taxon>Pseudomonadati</taxon>
        <taxon>Pseudomonadota</taxon>
        <taxon>Gammaproteobacteria</taxon>
        <taxon>Pseudomonadales</taxon>
        <taxon>Pseudomonadaceae</taxon>
        <taxon>Pseudomonas</taxon>
    </lineage>
</organism>
<feature type="chain" id="PRO_0000114058" description="Glutamyl-tRNA reductase">
    <location>
        <begin position="1"/>
        <end position="422"/>
    </location>
</feature>
<feature type="active site" description="Nucleophile" evidence="1">
    <location>
        <position position="50"/>
    </location>
</feature>
<feature type="binding site" evidence="1">
    <location>
        <begin position="49"/>
        <end position="52"/>
    </location>
    <ligand>
        <name>substrate</name>
    </ligand>
</feature>
<feature type="binding site" evidence="1">
    <location>
        <position position="107"/>
    </location>
    <ligand>
        <name>substrate</name>
    </ligand>
</feature>
<feature type="binding site" evidence="1">
    <location>
        <begin position="112"/>
        <end position="114"/>
    </location>
    <ligand>
        <name>substrate</name>
    </ligand>
</feature>
<feature type="binding site" evidence="1">
    <location>
        <position position="118"/>
    </location>
    <ligand>
        <name>substrate</name>
    </ligand>
</feature>
<feature type="binding site" evidence="1">
    <location>
        <begin position="187"/>
        <end position="192"/>
    </location>
    <ligand>
        <name>NADP(+)</name>
        <dbReference type="ChEBI" id="CHEBI:58349"/>
    </ligand>
</feature>
<feature type="site" description="Important for activity" evidence="1">
    <location>
        <position position="97"/>
    </location>
</feature>
<feature type="sequence conflict" description="In Ref. 1; CAA57574." evidence="2" ref="1">
    <original>I</original>
    <variation>V</variation>
    <location>
        <position position="59"/>
    </location>
</feature>
<feature type="sequence conflict" description="In Ref. 1; CAA57574." evidence="2" ref="1">
    <original>DTA</original>
    <variation>ETD</variation>
    <location>
        <begin position="153"/>
        <end position="155"/>
    </location>
</feature>
<feature type="sequence conflict" description="In Ref. 1; CAA57574." evidence="2" ref="1">
    <original>G</original>
    <variation>A</variation>
    <location>
        <position position="314"/>
    </location>
</feature>
<feature type="sequence conflict" description="In Ref. 1; CAA57574." evidence="2" ref="1">
    <original>L</original>
    <variation>V</variation>
    <location>
        <position position="343"/>
    </location>
</feature>
<feature type="sequence conflict" description="In Ref. 1; CAA57574." evidence="2" ref="1">
    <original>G</original>
    <variation>C</variation>
    <location>
        <position position="418"/>
    </location>
</feature>
<gene>
    <name evidence="1" type="primary">hemA</name>
    <name type="ordered locus">PA4666</name>
</gene>
<name>HEM1_PSEAE</name>
<protein>
    <recommendedName>
        <fullName evidence="1">Glutamyl-tRNA reductase</fullName>
        <shortName evidence="1">GluTR</shortName>
        <ecNumber evidence="1">1.2.1.70</ecNumber>
    </recommendedName>
</protein>
<accession>P42807</accession>
<proteinExistence type="inferred from homology"/>
<keyword id="KW-0521">NADP</keyword>
<keyword id="KW-0560">Oxidoreductase</keyword>
<keyword id="KW-0627">Porphyrin biosynthesis</keyword>
<keyword id="KW-1185">Reference proteome</keyword>
<reference key="1">
    <citation type="journal article" date="1995" name="J. Bacteriol.">
        <title>Regulation of the hemA gene during 5-aminolevulinic acid formation in Pseudomonas aeruginosa.</title>
        <authorList>
            <person name="Hungerer C."/>
            <person name="Troup B."/>
            <person name="Roemling U."/>
            <person name="Jahn D."/>
        </authorList>
    </citation>
    <scope>NUCLEOTIDE SEQUENCE [GENOMIC DNA]</scope>
    <source>
        <strain>ATCC 15692 / DSM 22644 / CIP 104116 / JCM 14847 / LMG 12228 / 1C / PRS 101 / PAO1</strain>
    </source>
</reference>
<reference key="2">
    <citation type="journal article" date="2000" name="Nature">
        <title>Complete genome sequence of Pseudomonas aeruginosa PAO1, an opportunistic pathogen.</title>
        <authorList>
            <person name="Stover C.K."/>
            <person name="Pham X.-Q.T."/>
            <person name="Erwin A.L."/>
            <person name="Mizoguchi S.D."/>
            <person name="Warrener P."/>
            <person name="Hickey M.J."/>
            <person name="Brinkman F.S.L."/>
            <person name="Hufnagle W.O."/>
            <person name="Kowalik D.J."/>
            <person name="Lagrou M."/>
            <person name="Garber R.L."/>
            <person name="Goltry L."/>
            <person name="Tolentino E."/>
            <person name="Westbrock-Wadman S."/>
            <person name="Yuan Y."/>
            <person name="Brody L.L."/>
            <person name="Coulter S.N."/>
            <person name="Folger K.R."/>
            <person name="Kas A."/>
            <person name="Larbig K."/>
            <person name="Lim R.M."/>
            <person name="Smith K.A."/>
            <person name="Spencer D.H."/>
            <person name="Wong G.K.-S."/>
            <person name="Wu Z."/>
            <person name="Paulsen I.T."/>
            <person name="Reizer J."/>
            <person name="Saier M.H. Jr."/>
            <person name="Hancock R.E.W."/>
            <person name="Lory S."/>
            <person name="Olson M.V."/>
        </authorList>
    </citation>
    <scope>NUCLEOTIDE SEQUENCE [LARGE SCALE GENOMIC DNA]</scope>
    <source>
        <strain>ATCC 15692 / DSM 22644 / CIP 104116 / JCM 14847 / LMG 12228 / 1C / PRS 101 / PAO1</strain>
    </source>
</reference>
<dbReference type="EC" id="1.2.1.70" evidence="1"/>
<dbReference type="EMBL" id="X82071">
    <property type="protein sequence ID" value="CAA57574.1"/>
    <property type="status" value="ALT_INIT"/>
    <property type="molecule type" value="Genomic_DNA"/>
</dbReference>
<dbReference type="EMBL" id="AE004091">
    <property type="protein sequence ID" value="AAG08053.1"/>
    <property type="molecule type" value="Genomic_DNA"/>
</dbReference>
<dbReference type="PIR" id="C83063">
    <property type="entry name" value="C83063"/>
</dbReference>
<dbReference type="RefSeq" id="NP_253355.1">
    <property type="nucleotide sequence ID" value="NC_002516.2"/>
</dbReference>
<dbReference type="RefSeq" id="WP_003095001.1">
    <property type="nucleotide sequence ID" value="NZ_QZGE01000029.1"/>
</dbReference>
<dbReference type="SMR" id="P42807"/>
<dbReference type="FunCoup" id="P42807">
    <property type="interactions" value="438"/>
</dbReference>
<dbReference type="STRING" id="208964.PA4666"/>
<dbReference type="PaxDb" id="208964-PA4666"/>
<dbReference type="GeneID" id="881361"/>
<dbReference type="KEGG" id="pae:PA4666"/>
<dbReference type="PATRIC" id="fig|208964.12.peg.4888"/>
<dbReference type="PseudoCAP" id="PA4666"/>
<dbReference type="HOGENOM" id="CLU_035113_2_2_6"/>
<dbReference type="InParanoid" id="P42807"/>
<dbReference type="OrthoDB" id="110209at2"/>
<dbReference type="PhylomeDB" id="P42807"/>
<dbReference type="BioCyc" id="PAER208964:G1FZ6-4762-MONOMER"/>
<dbReference type="UniPathway" id="UPA00251">
    <property type="reaction ID" value="UER00316"/>
</dbReference>
<dbReference type="Proteomes" id="UP000002438">
    <property type="component" value="Chromosome"/>
</dbReference>
<dbReference type="GO" id="GO:0008883">
    <property type="term" value="F:glutamyl-tRNA reductase activity"/>
    <property type="evidence" value="ECO:0000318"/>
    <property type="project" value="GO_Central"/>
</dbReference>
<dbReference type="GO" id="GO:0050661">
    <property type="term" value="F:NADP binding"/>
    <property type="evidence" value="ECO:0007669"/>
    <property type="project" value="InterPro"/>
</dbReference>
<dbReference type="GO" id="GO:0019353">
    <property type="term" value="P:protoporphyrinogen IX biosynthetic process from glutamate"/>
    <property type="evidence" value="ECO:0000318"/>
    <property type="project" value="GO_Central"/>
</dbReference>
<dbReference type="CDD" id="cd05213">
    <property type="entry name" value="NAD_bind_Glutamyl_tRNA_reduct"/>
    <property type="match status" value="1"/>
</dbReference>
<dbReference type="FunFam" id="3.30.460.30:FF:000001">
    <property type="entry name" value="Glutamyl-tRNA reductase"/>
    <property type="match status" value="1"/>
</dbReference>
<dbReference type="FunFam" id="3.40.50.720:FF:000031">
    <property type="entry name" value="Glutamyl-tRNA reductase"/>
    <property type="match status" value="1"/>
</dbReference>
<dbReference type="Gene3D" id="3.30.460.30">
    <property type="entry name" value="Glutamyl-tRNA reductase, N-terminal domain"/>
    <property type="match status" value="1"/>
</dbReference>
<dbReference type="Gene3D" id="3.40.50.720">
    <property type="entry name" value="NAD(P)-binding Rossmann-like Domain"/>
    <property type="match status" value="1"/>
</dbReference>
<dbReference type="HAMAP" id="MF_00087">
    <property type="entry name" value="Glu_tRNA_reductase"/>
    <property type="match status" value="1"/>
</dbReference>
<dbReference type="InterPro" id="IPR000343">
    <property type="entry name" value="4pyrrol_synth_GluRdtase"/>
</dbReference>
<dbReference type="InterPro" id="IPR015896">
    <property type="entry name" value="4pyrrol_synth_GluRdtase_dimer"/>
</dbReference>
<dbReference type="InterPro" id="IPR015895">
    <property type="entry name" value="4pyrrol_synth_GluRdtase_N"/>
</dbReference>
<dbReference type="InterPro" id="IPR018214">
    <property type="entry name" value="GluRdtase_CS"/>
</dbReference>
<dbReference type="InterPro" id="IPR036453">
    <property type="entry name" value="GluRdtase_dimer_dom_sf"/>
</dbReference>
<dbReference type="InterPro" id="IPR036343">
    <property type="entry name" value="GluRdtase_N_sf"/>
</dbReference>
<dbReference type="InterPro" id="IPR036291">
    <property type="entry name" value="NAD(P)-bd_dom_sf"/>
</dbReference>
<dbReference type="InterPro" id="IPR006151">
    <property type="entry name" value="Shikm_DH/Glu-tRNA_Rdtase"/>
</dbReference>
<dbReference type="NCBIfam" id="TIGR01035">
    <property type="entry name" value="hemA"/>
    <property type="match status" value="1"/>
</dbReference>
<dbReference type="PANTHER" id="PTHR43013">
    <property type="entry name" value="GLUTAMYL-TRNA REDUCTASE"/>
    <property type="match status" value="1"/>
</dbReference>
<dbReference type="PANTHER" id="PTHR43013:SF1">
    <property type="entry name" value="GLUTAMYL-TRNA REDUCTASE"/>
    <property type="match status" value="1"/>
</dbReference>
<dbReference type="Pfam" id="PF00745">
    <property type="entry name" value="GlutR_dimer"/>
    <property type="match status" value="1"/>
</dbReference>
<dbReference type="Pfam" id="PF05201">
    <property type="entry name" value="GlutR_N"/>
    <property type="match status" value="1"/>
</dbReference>
<dbReference type="Pfam" id="PF01488">
    <property type="entry name" value="Shikimate_DH"/>
    <property type="match status" value="1"/>
</dbReference>
<dbReference type="PIRSF" id="PIRSF000445">
    <property type="entry name" value="4pyrrol_synth_GluRdtase"/>
    <property type="match status" value="1"/>
</dbReference>
<dbReference type="SUPFAM" id="SSF69742">
    <property type="entry name" value="Glutamyl tRNA-reductase catalytic, N-terminal domain"/>
    <property type="match status" value="1"/>
</dbReference>
<dbReference type="SUPFAM" id="SSF69075">
    <property type="entry name" value="Glutamyl tRNA-reductase dimerization domain"/>
    <property type="match status" value="1"/>
</dbReference>
<dbReference type="SUPFAM" id="SSF51735">
    <property type="entry name" value="NAD(P)-binding Rossmann-fold domains"/>
    <property type="match status" value="1"/>
</dbReference>
<dbReference type="PROSITE" id="PS00747">
    <property type="entry name" value="GLUTR"/>
    <property type="match status" value="1"/>
</dbReference>
<evidence type="ECO:0000255" key="1">
    <source>
        <dbReference type="HAMAP-Rule" id="MF_00087"/>
    </source>
</evidence>
<evidence type="ECO:0000305" key="2"/>
<comment type="function">
    <text evidence="1">Catalyzes the NADPH-dependent reduction of glutamyl-tRNA(Glu) to glutamate 1-semialdehyde (GSA).</text>
</comment>
<comment type="catalytic activity">
    <reaction evidence="1">
        <text>(S)-4-amino-5-oxopentanoate + tRNA(Glu) + NADP(+) = L-glutamyl-tRNA(Glu) + NADPH + H(+)</text>
        <dbReference type="Rhea" id="RHEA:12344"/>
        <dbReference type="Rhea" id="RHEA-COMP:9663"/>
        <dbReference type="Rhea" id="RHEA-COMP:9680"/>
        <dbReference type="ChEBI" id="CHEBI:15378"/>
        <dbReference type="ChEBI" id="CHEBI:57501"/>
        <dbReference type="ChEBI" id="CHEBI:57783"/>
        <dbReference type="ChEBI" id="CHEBI:58349"/>
        <dbReference type="ChEBI" id="CHEBI:78442"/>
        <dbReference type="ChEBI" id="CHEBI:78520"/>
        <dbReference type="EC" id="1.2.1.70"/>
    </reaction>
</comment>
<comment type="pathway">
    <text evidence="1">Porphyrin-containing compound metabolism; protoporphyrin-IX biosynthesis; 5-aminolevulinate from L-glutamyl-tRNA(Glu): step 1/2.</text>
</comment>
<comment type="subunit">
    <text evidence="1">Homodimer.</text>
</comment>
<comment type="domain">
    <text evidence="1">Possesses an unusual extended V-shaped dimeric structure with each monomer consisting of three distinct domains arranged along a curved 'spinal' alpha-helix. The N-terminal catalytic domain specifically recognizes the glutamate moiety of the substrate. The second domain is the NADPH-binding domain, and the third C-terminal domain is responsible for dimerization.</text>
</comment>
<comment type="miscellaneous">
    <text evidence="1">During catalysis, the active site Cys acts as a nucleophile attacking the alpha-carbonyl group of tRNA-bound glutamate with the formation of a thioester intermediate between enzyme and glutamate, and the concomitant release of tRNA(Glu). The thioester intermediate is finally reduced by direct hydride transfer from NADPH, to form the product GSA.</text>
</comment>
<comment type="similarity">
    <text evidence="1">Belongs to the glutamyl-tRNA reductase family.</text>
</comment>
<comment type="sequence caution" evidence="2">
    <conflict type="erroneous initiation">
        <sequence resource="EMBL-CDS" id="CAA57574"/>
    </conflict>
</comment>
<sequence length="422" mass="46124">MAFIALGINHKTASVAVRERVAFTPEQMVEALQQLCRLTTSREAAILSTCNRSELYLEIDHPTADDVLAWLADYHRLTLDELRACAYVHQDEDAVRHMMRVASGLDSMVLGEPQILGQMKSAYAVAREAGTVGPLLGRLFQATFSTAKTVRTDTAIGENPVSVAFAAVSLAKQIFSDLHRSQALLIGAGETITLVARHLFEQGVKRIVVANRTLERASLLAEQFGAHAVLLSEIPEELANSDIVISSTASQLPILGKGAVERALKQRKHKPMFMVDIAVPRDIEPEVGELDDVYLYSVDDLHEVVAENLKSRQGAAQAAEELVGSGVAEFMQRLRELAAVDVLRAYRQQAERLRDEELGKAQRQLANGADPAEVMAQLARGLTNKLLHAPSVQMKKMSAEGRIDALALAQELFALDEGAPRH</sequence>